<organism>
    <name type="scientific">Buchnera aphidicola subsp. Schizaphis graminum (strain Sg)</name>
    <dbReference type="NCBI Taxonomy" id="198804"/>
    <lineage>
        <taxon>Bacteria</taxon>
        <taxon>Pseudomonadati</taxon>
        <taxon>Pseudomonadota</taxon>
        <taxon>Gammaproteobacteria</taxon>
        <taxon>Enterobacterales</taxon>
        <taxon>Erwiniaceae</taxon>
        <taxon>Buchnera</taxon>
    </lineage>
</organism>
<accession>Q8K9B0</accession>
<evidence type="ECO:0000255" key="1">
    <source>
        <dbReference type="HAMAP-Rule" id="MF_01486"/>
    </source>
</evidence>
<comment type="function">
    <text evidence="1">A helicase/nuclease that prepares dsDNA breaks (DSB) for recombinational DNA repair. Binds to DSBs and unwinds DNA via a highly rapid and processive ATP-dependent bidirectional helicase activity. Unwinds dsDNA until it encounters a Chi (crossover hotspot instigator) sequence from the 3' direction. Cuts ssDNA a few nucleotides 3' to the Chi site. The properties and activities of the enzyme are changed at Chi. The Chi-altered holoenzyme produces a long 3'-ssDNA overhang and facilitates RecA-binding to the ssDNA for homologous DNA recombination and repair. Holoenzyme degrades any linearized DNA that is unable to undergo homologous recombination. In the holoenzyme this subunit recognizes the wild-type Chi sequence, and when added to isolated RecB increases its ATP-dependent helicase processivity.</text>
</comment>
<comment type="subunit">
    <text evidence="1">Heterotrimer of RecB, RecC and RecD. All subunits contribute to DNA-binding.</text>
</comment>
<comment type="miscellaneous">
    <text evidence="1">In the RecBCD complex, RecB has a slow 3'-5' helicase, an exonuclease activity and loads RecA onto ssDNA, RecD has a fast 5'-3' helicase activity, while RecC stimulates the ATPase and processivity of the RecB helicase and contributes to recognition of the Chi site.</text>
</comment>
<comment type="similarity">
    <text evidence="1">Belongs to the RecC family.</text>
</comment>
<name>RECC_BUCAP</name>
<feature type="chain" id="PRO_0000087118" description="RecBCD enzyme subunit RecC">
    <location>
        <begin position="1"/>
        <end position="1061"/>
    </location>
</feature>
<dbReference type="EMBL" id="AE013218">
    <property type="protein sequence ID" value="AAM67981.1"/>
    <property type="molecule type" value="Genomic_DNA"/>
</dbReference>
<dbReference type="RefSeq" id="WP_011053948.1">
    <property type="nucleotide sequence ID" value="NC_004061.1"/>
</dbReference>
<dbReference type="SMR" id="Q8K9B0"/>
<dbReference type="STRING" id="198804.BUsg_438"/>
<dbReference type="GeneID" id="93003910"/>
<dbReference type="KEGG" id="bas:BUsg_438"/>
<dbReference type="eggNOG" id="COG1330">
    <property type="taxonomic scope" value="Bacteria"/>
</dbReference>
<dbReference type="HOGENOM" id="CLU_007513_0_0_6"/>
<dbReference type="Proteomes" id="UP000000416">
    <property type="component" value="Chromosome"/>
</dbReference>
<dbReference type="GO" id="GO:0009338">
    <property type="term" value="C:exodeoxyribonuclease V complex"/>
    <property type="evidence" value="ECO:0007669"/>
    <property type="project" value="InterPro"/>
</dbReference>
<dbReference type="GO" id="GO:0005524">
    <property type="term" value="F:ATP binding"/>
    <property type="evidence" value="ECO:0007669"/>
    <property type="project" value="UniProtKB-UniRule"/>
</dbReference>
<dbReference type="GO" id="GO:0003677">
    <property type="term" value="F:DNA binding"/>
    <property type="evidence" value="ECO:0007669"/>
    <property type="project" value="UniProtKB-UniRule"/>
</dbReference>
<dbReference type="GO" id="GO:0003678">
    <property type="term" value="F:DNA helicase activity"/>
    <property type="evidence" value="ECO:0007669"/>
    <property type="project" value="UniProtKB-UniRule"/>
</dbReference>
<dbReference type="GO" id="GO:0008854">
    <property type="term" value="F:exodeoxyribonuclease V activity"/>
    <property type="evidence" value="ECO:0007669"/>
    <property type="project" value="UniProtKB-EC"/>
</dbReference>
<dbReference type="GO" id="GO:0000724">
    <property type="term" value="P:double-strand break repair via homologous recombination"/>
    <property type="evidence" value="ECO:0007669"/>
    <property type="project" value="UniProtKB-UniRule"/>
</dbReference>
<dbReference type="CDD" id="cd22353">
    <property type="entry name" value="RecC_C-like"/>
    <property type="match status" value="1"/>
</dbReference>
<dbReference type="Gene3D" id="1.10.10.160">
    <property type="match status" value="1"/>
</dbReference>
<dbReference type="Gene3D" id="1.10.10.990">
    <property type="match status" value="1"/>
</dbReference>
<dbReference type="Gene3D" id="3.40.50.10930">
    <property type="match status" value="1"/>
</dbReference>
<dbReference type="Gene3D" id="3.40.50.300">
    <property type="entry name" value="P-loop containing nucleotide triphosphate hydrolases"/>
    <property type="match status" value="2"/>
</dbReference>
<dbReference type="HAMAP" id="MF_01486">
    <property type="entry name" value="RecC"/>
    <property type="match status" value="1"/>
</dbReference>
<dbReference type="InterPro" id="IPR013986">
    <property type="entry name" value="DExx_box_DNA_helicase_dom_sf"/>
</dbReference>
<dbReference type="InterPro" id="IPR027417">
    <property type="entry name" value="P-loop_NTPase"/>
</dbReference>
<dbReference type="InterPro" id="IPR006697">
    <property type="entry name" value="RecC"/>
</dbReference>
<dbReference type="InterPro" id="IPR041500">
    <property type="entry name" value="RecC_C"/>
</dbReference>
<dbReference type="InterPro" id="IPR011335">
    <property type="entry name" value="Restrct_endonuc-II-like"/>
</dbReference>
<dbReference type="PANTHER" id="PTHR30591">
    <property type="entry name" value="RECBCD ENZYME SUBUNIT RECC"/>
    <property type="match status" value="1"/>
</dbReference>
<dbReference type="PANTHER" id="PTHR30591:SF1">
    <property type="entry name" value="RECBCD ENZYME SUBUNIT RECC"/>
    <property type="match status" value="1"/>
</dbReference>
<dbReference type="Pfam" id="PF04257">
    <property type="entry name" value="Exonuc_V_gamma"/>
    <property type="match status" value="1"/>
</dbReference>
<dbReference type="Pfam" id="PF17946">
    <property type="entry name" value="RecC_C"/>
    <property type="match status" value="1"/>
</dbReference>
<dbReference type="PIRSF" id="PIRSF000980">
    <property type="entry name" value="RecC"/>
    <property type="match status" value="1"/>
</dbReference>
<dbReference type="SUPFAM" id="SSF52540">
    <property type="entry name" value="P-loop containing nucleoside triphosphate hydrolases"/>
    <property type="match status" value="2"/>
</dbReference>
<dbReference type="SUPFAM" id="SSF52980">
    <property type="entry name" value="Restriction endonuclease-like"/>
    <property type="match status" value="1"/>
</dbReference>
<keyword id="KW-0067">ATP-binding</keyword>
<keyword id="KW-0227">DNA damage</keyword>
<keyword id="KW-0234">DNA repair</keyword>
<keyword id="KW-0238">DNA-binding</keyword>
<keyword id="KW-0269">Exonuclease</keyword>
<keyword id="KW-0347">Helicase</keyword>
<keyword id="KW-0378">Hydrolase</keyword>
<keyword id="KW-0540">Nuclease</keyword>
<keyword id="KW-0547">Nucleotide-binding</keyword>
<protein>
    <recommendedName>
        <fullName evidence="1">RecBCD enzyme subunit RecC</fullName>
    </recommendedName>
    <alternativeName>
        <fullName evidence="1">Exonuclease V subunit RecC</fullName>
        <shortName evidence="1">ExoV subunit RecC</shortName>
    </alternativeName>
    <alternativeName>
        <fullName evidence="1">Helicase/nuclease RecBCD subunit RecC</fullName>
    </alternativeName>
</protein>
<sequence length="1061" mass="127631">MFFVYRSNQIDILFTKICKIIKKKPLLNIFEREIIIHDNEILFQNLNTFIANHTGIAADFKLIYPNVFIWKLFKQVFSDIQLNNIFSRSTITWKIMKIIEENDFCKFVQKKDKIMKKFEFSFLMSHLYQQYILYRPNWINMWEKNKKNTLKIEKKDEWQAKLWIKIILYTEKLQQSKWHFSNLFKKFKTLKKIEHIKFPKRIFIIYSISLNPKYMEIFKKISTYTDIYFLSINACEKKIFHISFAKNYVVQKNNLLMNLSEKYEKFYFLFFKKFKKIKYNNFFQKNNSNNLLNIVKNDFLNFKEKENLLKKNSFLLKDNSISINICCDKKHEIEVLYNKLLSFFNEDSKLKPSDIVITSFSLNTYIIYINSIFKSKNKKEKIPFYISKKHSDKIEKILFIFNKILNLPNIRCNNEEILDLIEIQDIRDKFDISEEEINILYEWIEKANIRWGLHENEKQKNNLIFIKKNQNTWFYGIKKLLISHAINEEEEVWNNVLSCTSINTSRTELIGKLINFIKVLDQWRDKLFFSKKIKSWRPLFLCFIKDFFYKNEKIRDSIDIINKTWTKMIDDATLSNYEKKIPISILKKKFSHIMNNFSEKKFLPGVINFCHPSLVCYIPFKIKCIIGAEYQEIPKKKLSSFNLIDKYPLTSDLHICKENYIFLQNFISTQETLYISYVGHSLKNNNKVRSSILIDQLLNHITSNFYVSEHHDYKNNKKEIFEHICKKHKKENLYEKKQVNKINLNTLQKTKKINQEIYNKIFSIKNRIISTSTQISLKSLISFWKNPIRYFFNYTLNIKLKIAKRNIITEPFSINLFDDFKISNIIFKKILNNESIKDEFKKIILSGILPYGHFGSILLKEKKKEIENIVKAIYKYRISSPKKENFDIKIEKYNINGCLDEIQNTGLLRWKLGTINYRDRISLWLEHLIYCILGGTGESKIIGYKKNFFSFYPLSSHLAYNYLFTYIEGYMKGMKNPLLLIKSGSNWFDKVYDKKNDCIKKNDDIKRKAYKILYHTWMGNEYITGEKEDLYIQQIISELNVKKICKISQKWFTPILKHQKK</sequence>
<proteinExistence type="inferred from homology"/>
<reference key="1">
    <citation type="journal article" date="2002" name="Science">
        <title>50 million years of genomic stasis in endosymbiotic bacteria.</title>
        <authorList>
            <person name="Tamas I."/>
            <person name="Klasson L."/>
            <person name="Canbaeck B."/>
            <person name="Naeslund A.K."/>
            <person name="Eriksson A.-S."/>
            <person name="Wernegreen J.J."/>
            <person name="Sandstroem J.P."/>
            <person name="Moran N.A."/>
            <person name="Andersson S.G.E."/>
        </authorList>
    </citation>
    <scope>NUCLEOTIDE SEQUENCE [LARGE SCALE GENOMIC DNA]</scope>
    <source>
        <strain>Sg</strain>
    </source>
</reference>
<gene>
    <name evidence="1" type="primary">recC</name>
    <name type="ordered locus">BUsg_438</name>
</gene>